<accession>B2UC74</accession>
<gene>
    <name evidence="1" type="primary">queA</name>
    <name type="ordered locus">Rpic_2956</name>
</gene>
<protein>
    <recommendedName>
        <fullName evidence="1">S-adenosylmethionine:tRNA ribosyltransferase-isomerase</fullName>
        <ecNumber evidence="1">2.4.99.17</ecNumber>
    </recommendedName>
    <alternativeName>
        <fullName evidence="1">Queuosine biosynthesis protein QueA</fullName>
    </alternativeName>
</protein>
<organism>
    <name type="scientific">Ralstonia pickettii (strain 12J)</name>
    <dbReference type="NCBI Taxonomy" id="402626"/>
    <lineage>
        <taxon>Bacteria</taxon>
        <taxon>Pseudomonadati</taxon>
        <taxon>Pseudomonadota</taxon>
        <taxon>Betaproteobacteria</taxon>
        <taxon>Burkholderiales</taxon>
        <taxon>Burkholderiaceae</taxon>
        <taxon>Ralstonia</taxon>
    </lineage>
</organism>
<proteinExistence type="inferred from homology"/>
<reference key="1">
    <citation type="submission" date="2008-05" db="EMBL/GenBank/DDBJ databases">
        <title>Complete sequence of chromosome 1 of Ralstonia pickettii 12J.</title>
        <authorList>
            <person name="Lucas S."/>
            <person name="Copeland A."/>
            <person name="Lapidus A."/>
            <person name="Glavina del Rio T."/>
            <person name="Dalin E."/>
            <person name="Tice H."/>
            <person name="Bruce D."/>
            <person name="Goodwin L."/>
            <person name="Pitluck S."/>
            <person name="Meincke L."/>
            <person name="Brettin T."/>
            <person name="Detter J.C."/>
            <person name="Han C."/>
            <person name="Kuske C.R."/>
            <person name="Schmutz J."/>
            <person name="Larimer F."/>
            <person name="Land M."/>
            <person name="Hauser L."/>
            <person name="Kyrpides N."/>
            <person name="Mikhailova N."/>
            <person name="Marsh T."/>
            <person name="Richardson P."/>
        </authorList>
    </citation>
    <scope>NUCLEOTIDE SEQUENCE [LARGE SCALE GENOMIC DNA]</scope>
    <source>
        <strain>12J</strain>
    </source>
</reference>
<evidence type="ECO:0000255" key="1">
    <source>
        <dbReference type="HAMAP-Rule" id="MF_00113"/>
    </source>
</evidence>
<feature type="chain" id="PRO_1000094805" description="S-adenosylmethionine:tRNA ribosyltransferase-isomerase">
    <location>
        <begin position="1"/>
        <end position="359"/>
    </location>
</feature>
<comment type="function">
    <text evidence="1">Transfers and isomerizes the ribose moiety from AdoMet to the 7-aminomethyl group of 7-deazaguanine (preQ1-tRNA) to give epoxyqueuosine (oQ-tRNA).</text>
</comment>
<comment type="catalytic activity">
    <reaction evidence="1">
        <text>7-aminomethyl-7-carbaguanosine(34) in tRNA + S-adenosyl-L-methionine = epoxyqueuosine(34) in tRNA + adenine + L-methionine + 2 H(+)</text>
        <dbReference type="Rhea" id="RHEA:32155"/>
        <dbReference type="Rhea" id="RHEA-COMP:10342"/>
        <dbReference type="Rhea" id="RHEA-COMP:18582"/>
        <dbReference type="ChEBI" id="CHEBI:15378"/>
        <dbReference type="ChEBI" id="CHEBI:16708"/>
        <dbReference type="ChEBI" id="CHEBI:57844"/>
        <dbReference type="ChEBI" id="CHEBI:59789"/>
        <dbReference type="ChEBI" id="CHEBI:82833"/>
        <dbReference type="ChEBI" id="CHEBI:194443"/>
        <dbReference type="EC" id="2.4.99.17"/>
    </reaction>
</comment>
<comment type="pathway">
    <text evidence="1">tRNA modification; tRNA-queuosine biosynthesis.</text>
</comment>
<comment type="subunit">
    <text evidence="1">Monomer.</text>
</comment>
<comment type="subcellular location">
    <subcellularLocation>
        <location evidence="1">Cytoplasm</location>
    </subcellularLocation>
</comment>
<comment type="similarity">
    <text evidence="1">Belongs to the QueA family.</text>
</comment>
<dbReference type="EC" id="2.4.99.17" evidence="1"/>
<dbReference type="EMBL" id="CP001068">
    <property type="protein sequence ID" value="ACD28079.1"/>
    <property type="molecule type" value="Genomic_DNA"/>
</dbReference>
<dbReference type="SMR" id="B2UC74"/>
<dbReference type="STRING" id="402626.Rpic_2956"/>
<dbReference type="KEGG" id="rpi:Rpic_2956"/>
<dbReference type="PATRIC" id="fig|402626.5.peg.4092"/>
<dbReference type="eggNOG" id="COG0809">
    <property type="taxonomic scope" value="Bacteria"/>
</dbReference>
<dbReference type="HOGENOM" id="CLU_039110_1_0_4"/>
<dbReference type="UniPathway" id="UPA00392"/>
<dbReference type="GO" id="GO:0005737">
    <property type="term" value="C:cytoplasm"/>
    <property type="evidence" value="ECO:0007669"/>
    <property type="project" value="UniProtKB-SubCell"/>
</dbReference>
<dbReference type="GO" id="GO:0051075">
    <property type="term" value="F:S-adenosylmethionine:tRNA ribosyltransferase-isomerase activity"/>
    <property type="evidence" value="ECO:0007669"/>
    <property type="project" value="UniProtKB-EC"/>
</dbReference>
<dbReference type="GO" id="GO:0008616">
    <property type="term" value="P:queuosine biosynthetic process"/>
    <property type="evidence" value="ECO:0007669"/>
    <property type="project" value="UniProtKB-UniRule"/>
</dbReference>
<dbReference type="GO" id="GO:0002099">
    <property type="term" value="P:tRNA wobble guanine modification"/>
    <property type="evidence" value="ECO:0007669"/>
    <property type="project" value="TreeGrafter"/>
</dbReference>
<dbReference type="FunFam" id="3.40.1780.10:FF:000001">
    <property type="entry name" value="S-adenosylmethionine:tRNA ribosyltransferase-isomerase"/>
    <property type="match status" value="1"/>
</dbReference>
<dbReference type="Gene3D" id="2.40.10.240">
    <property type="entry name" value="QueA-like"/>
    <property type="match status" value="1"/>
</dbReference>
<dbReference type="Gene3D" id="3.40.1780.10">
    <property type="entry name" value="QueA-like"/>
    <property type="match status" value="1"/>
</dbReference>
<dbReference type="HAMAP" id="MF_00113">
    <property type="entry name" value="QueA"/>
    <property type="match status" value="1"/>
</dbReference>
<dbReference type="InterPro" id="IPR003699">
    <property type="entry name" value="QueA"/>
</dbReference>
<dbReference type="InterPro" id="IPR042118">
    <property type="entry name" value="QueA_dom1"/>
</dbReference>
<dbReference type="InterPro" id="IPR042119">
    <property type="entry name" value="QueA_dom2"/>
</dbReference>
<dbReference type="InterPro" id="IPR036100">
    <property type="entry name" value="QueA_sf"/>
</dbReference>
<dbReference type="NCBIfam" id="NF001140">
    <property type="entry name" value="PRK00147.1"/>
    <property type="match status" value="1"/>
</dbReference>
<dbReference type="NCBIfam" id="TIGR00113">
    <property type="entry name" value="queA"/>
    <property type="match status" value="1"/>
</dbReference>
<dbReference type="PANTHER" id="PTHR30307">
    <property type="entry name" value="S-ADENOSYLMETHIONINE:TRNA RIBOSYLTRANSFERASE-ISOMERASE"/>
    <property type="match status" value="1"/>
</dbReference>
<dbReference type="PANTHER" id="PTHR30307:SF0">
    <property type="entry name" value="S-ADENOSYLMETHIONINE:TRNA RIBOSYLTRANSFERASE-ISOMERASE"/>
    <property type="match status" value="1"/>
</dbReference>
<dbReference type="Pfam" id="PF02547">
    <property type="entry name" value="Queuosine_synth"/>
    <property type="match status" value="1"/>
</dbReference>
<dbReference type="SUPFAM" id="SSF111337">
    <property type="entry name" value="QueA-like"/>
    <property type="match status" value="1"/>
</dbReference>
<name>QUEA_RALPJ</name>
<keyword id="KW-0963">Cytoplasm</keyword>
<keyword id="KW-0671">Queuosine biosynthesis</keyword>
<keyword id="KW-0949">S-adenosyl-L-methionine</keyword>
<keyword id="KW-0808">Transferase</keyword>
<sequence>MLTLSDFDFDLPPELIAQTALPDRTASRLLAVRRTEDAVHFEDRQFADLVDYLRPGDLLVFNDTRVIKARFFGHKASGGKVEVLVERLLDEHTVLAQIRSSKSPVEGTSLRLADAFDVTVGPRAEPFFTLRFPQPALDLIEQYGRLPLPPYIEHDPDSFDETRYQTVYARNPGAVAAPTAGLHFDDALFAKLDAMGIRRGFLTLHVGAGTFQPVRVENIAEHRMHSEWYEITPELAEAIRATRAAGGRVIAVGTTSMRALESAAQPDGTLNACSGETDIFITPGYRFRAVDLLVTNFHLPKSTLLMLVSAFAGMSAIREAYQHAIAQRYRFFSYGDAMLLTRAPTEPGEPGEPGETQSL</sequence>